<gene>
    <name type="primary">SSII-1</name>
    <name type="ordered locus">Os10g0437600</name>
    <name type="ordered locus">LOC_Os10g30156</name>
    <name type="ORF">OSJNBb0016G17.2</name>
</gene>
<comment type="function">
    <text evidence="3">May be involved in starch synthesis in endosperm amyloplasts and contribute to the deposition of transient starch in chloroplasts of leaves.</text>
</comment>
<comment type="catalytic activity">
    <reaction>
        <text>[(1-&gt;4)-alpha-D-glucosyl](n) + ADP-alpha-D-glucose = [(1-&gt;4)-alpha-D-glucosyl](n+1) + ADP + H(+)</text>
        <dbReference type="Rhea" id="RHEA:18189"/>
        <dbReference type="Rhea" id="RHEA-COMP:9584"/>
        <dbReference type="Rhea" id="RHEA-COMP:9587"/>
        <dbReference type="ChEBI" id="CHEBI:15378"/>
        <dbReference type="ChEBI" id="CHEBI:15444"/>
        <dbReference type="ChEBI" id="CHEBI:57498"/>
        <dbReference type="ChEBI" id="CHEBI:456216"/>
        <dbReference type="EC" id="2.4.1.21"/>
    </reaction>
</comment>
<comment type="pathway">
    <text>Glycan biosynthesis; starch biosynthesis.</text>
</comment>
<comment type="subcellular location">
    <subcellularLocation>
        <location>Plastid</location>
        <location>Amyloplast</location>
    </subcellularLocation>
    <subcellularLocation>
        <location>Plastid</location>
        <location>Chloroplast</location>
    </subcellularLocation>
    <text>Amyloplast or chloroplast, granule-bound and soluble.</text>
</comment>
<comment type="tissue specificity">
    <text evidence="3 4">Expressed in endosperm, leaves, and weakly in roots.</text>
</comment>
<comment type="developmental stage">
    <text evidence="3">Expressed in developing caryopsis at 1 to 20 days after flowering. Expressed in the pericarp and endosperm at 5 and 5 to 10 days after flowering respectively.</text>
</comment>
<comment type="similarity">
    <text evidence="5">Belongs to the glycosyltransferase 1 family. Bacterial/plant glycogen synthase subfamily.</text>
</comment>
<name>SSY21_ORYSJ</name>
<accession>Q7XE48</accession>
<accession>Q109M8</accession>
<accession>Q94F83</accession>
<protein>
    <recommendedName>
        <fullName>Soluble starch synthase 2-1, chloroplastic/amyloplastic</fullName>
        <ecNumber>2.4.1.21</ecNumber>
    </recommendedName>
    <alternativeName>
        <fullName>Soluble starch synthase II-1</fullName>
    </alternativeName>
</protein>
<organism>
    <name type="scientific">Oryza sativa subsp. japonica</name>
    <name type="common">Rice</name>
    <dbReference type="NCBI Taxonomy" id="39947"/>
    <lineage>
        <taxon>Eukaryota</taxon>
        <taxon>Viridiplantae</taxon>
        <taxon>Streptophyta</taxon>
        <taxon>Embryophyta</taxon>
        <taxon>Tracheophyta</taxon>
        <taxon>Spermatophyta</taxon>
        <taxon>Magnoliopsida</taxon>
        <taxon>Liliopsida</taxon>
        <taxon>Poales</taxon>
        <taxon>Poaceae</taxon>
        <taxon>BOP clade</taxon>
        <taxon>Oryzoideae</taxon>
        <taxon>Oryzeae</taxon>
        <taxon>Oryzinae</taxon>
        <taxon>Oryza</taxon>
        <taxon>Oryza sativa</taxon>
    </lineage>
</organism>
<sequence>MAAAAVSSLLAPSGSCYSPGCHSCWGPGPGGGRRLPSPRRRPITAAARPTWAVPRRSRLEWGRVEAQNSGARTSCRAALQWLSSTARSHVNVGYGSPLVFPGLTKPGSSRCLCVVGMVGNAGNQVGDDSDDGIKVTNEKLRAVIRKSKEVLEIHRNLLEKISASERKKITSIIEDSSIYNEQDPFGQRDSSFYHLDEVPDDDEFSYDLQMYLDRRPDQSEVVATQDYEAQLSQISEMGQSVAEGTSDDPSASAAVDLINIILVAAECAPWSKTGGLGDVAGALPKALARRGHRVMVVVPMYKNYAEPQQLGEPRRYQVAGQDMEVIYYHAYIDGVDFVFIDNPIFHHVENDIYGGDRTDILKRMVLLCKAAIEVPWYVPCGGYCYGDGNLVFLANDWHTALLPVYLKAYYHDNGFMIYARSVLVIHNIAHQGRGPLDDFSYLDLPVDYMDLFKLYDPFGGDHLNIFAAGIKAADRLLTVSHGYAWELKTAEGGWGLHGIINESDWKFQGIVNGIDTTDWNPRCDIHLKSDGYTNYSLETVQAGKQQCKAALQKELGLPVRGDVPVIAFIGRLDHQKGVDLIAEAMPWIAGQDVQLIMLGTGRQDLEDTLRRLESQHYDRVRGWVGFSIRLAHRMTAGADILLMPSRFEPCGLNQLYAMMYGTVPVVHAVGGLRDTVEHYNPYEESGLGWTFEKAEANRLIDALGHCLNTYRNYRTSWEGLQKRGMMQDLSWDNAAKLYEEVLLAAKYQW</sequence>
<keyword id="KW-0035">Amyloplast</keyword>
<keyword id="KW-0150">Chloroplast</keyword>
<keyword id="KW-0328">Glycosyltransferase</keyword>
<keyword id="KW-0934">Plastid</keyword>
<keyword id="KW-1185">Reference proteome</keyword>
<keyword id="KW-0750">Starch biosynthesis</keyword>
<keyword id="KW-0808">Transferase</keyword>
<keyword id="KW-0809">Transit peptide</keyword>
<reference key="1">
    <citation type="journal article" date="2004" name="Planta">
        <title>Molecular cloning and expression analysis of three genes encoding starch synthase II in rice.</title>
        <authorList>
            <person name="Jiang H.W."/>
            <person name="Dian W.M."/>
            <person name="Liu F."/>
            <person name="Wu P."/>
        </authorList>
    </citation>
    <scope>NUCLEOTIDE SEQUENCE [MRNA]</scope>
    <scope>FUNCTION</scope>
    <scope>SUBCELLULAR LOCATION</scope>
    <scope>TISSUE SPECIFICITY</scope>
    <scope>DEVELOPMENTAL STAGE</scope>
</reference>
<reference key="2">
    <citation type="journal article" date="2003" name="Science">
        <title>In-depth view of structure, activity, and evolution of rice chromosome 10.</title>
        <authorList>
            <person name="Yu Y."/>
            <person name="Rambo T."/>
            <person name="Currie J."/>
            <person name="Saski C."/>
            <person name="Kim H.-R."/>
            <person name="Collura K."/>
            <person name="Thompson S."/>
            <person name="Simmons J."/>
            <person name="Yang T.-J."/>
            <person name="Nah G."/>
            <person name="Patel A.J."/>
            <person name="Thurmond S."/>
            <person name="Henry D."/>
            <person name="Oates R."/>
            <person name="Palmer M."/>
            <person name="Pries G."/>
            <person name="Gibson J."/>
            <person name="Anderson H."/>
            <person name="Paradkar M."/>
            <person name="Crane L."/>
            <person name="Dale J."/>
            <person name="Carver M.B."/>
            <person name="Wood T."/>
            <person name="Frisch D."/>
            <person name="Engler F."/>
            <person name="Soderlund C."/>
            <person name="Palmer L.E."/>
            <person name="Teytelman L."/>
            <person name="Nascimento L."/>
            <person name="De la Bastide M."/>
            <person name="Spiegel L."/>
            <person name="Ware D."/>
            <person name="O'Shaughnessy A."/>
            <person name="Dike S."/>
            <person name="Dedhia N."/>
            <person name="Preston R."/>
            <person name="Huang E."/>
            <person name="Ferraro K."/>
            <person name="Kuit K."/>
            <person name="Miller B."/>
            <person name="Zutavern T."/>
            <person name="Katzenberger F."/>
            <person name="Muller S."/>
            <person name="Balija V."/>
            <person name="Martienssen R.A."/>
            <person name="Stein L."/>
            <person name="Minx P."/>
            <person name="Johnson D."/>
            <person name="Cordum H."/>
            <person name="Mardis E."/>
            <person name="Cheng Z."/>
            <person name="Jiang J."/>
            <person name="Wilson R."/>
            <person name="McCombie W.R."/>
            <person name="Wing R.A."/>
            <person name="Yuan Q."/>
            <person name="Ouyang S."/>
            <person name="Liu J."/>
            <person name="Jones K.M."/>
            <person name="Gansberger K."/>
            <person name="Moffat K."/>
            <person name="Hill J."/>
            <person name="Tsitrin T."/>
            <person name="Overton L."/>
            <person name="Bera J."/>
            <person name="Kim M."/>
            <person name="Jin S."/>
            <person name="Tallon L."/>
            <person name="Ciecko A."/>
            <person name="Pai G."/>
            <person name="Van Aken S."/>
            <person name="Utterback T."/>
            <person name="Reidmuller S."/>
            <person name="Bormann J."/>
            <person name="Feldblyum T."/>
            <person name="Hsiao J."/>
            <person name="Zismann V."/>
            <person name="Blunt S."/>
            <person name="de Vazeille A.R."/>
            <person name="Shaffer T."/>
            <person name="Koo H."/>
            <person name="Suh B."/>
            <person name="Yang Q."/>
            <person name="Haas B."/>
            <person name="Peterson J."/>
            <person name="Pertea M."/>
            <person name="Volfovsky N."/>
            <person name="Wortman J."/>
            <person name="White O."/>
            <person name="Salzberg S.L."/>
            <person name="Fraser C.M."/>
            <person name="Buell C.R."/>
            <person name="Messing J."/>
            <person name="Song R."/>
            <person name="Fuks G."/>
            <person name="Llaca V."/>
            <person name="Kovchak S."/>
            <person name="Young S."/>
            <person name="Bowers J.E."/>
            <person name="Paterson A.H."/>
            <person name="Johns M.A."/>
            <person name="Mao L."/>
            <person name="Pan H."/>
            <person name="Dean R.A."/>
        </authorList>
    </citation>
    <scope>NUCLEOTIDE SEQUENCE [LARGE SCALE GENOMIC DNA]</scope>
    <source>
        <strain>cv. Nipponbare</strain>
    </source>
</reference>
<reference key="3">
    <citation type="journal article" date="2005" name="Nature">
        <title>The map-based sequence of the rice genome.</title>
        <authorList>
            <consortium name="International rice genome sequencing project (IRGSP)"/>
        </authorList>
    </citation>
    <scope>NUCLEOTIDE SEQUENCE [LARGE SCALE GENOMIC DNA]</scope>
    <source>
        <strain>cv. Nipponbare</strain>
    </source>
</reference>
<reference key="4">
    <citation type="journal article" date="2008" name="Nucleic Acids Res.">
        <title>The rice annotation project database (RAP-DB): 2008 update.</title>
        <authorList>
            <consortium name="The rice annotation project (RAP)"/>
        </authorList>
    </citation>
    <scope>GENOME REANNOTATION</scope>
    <source>
        <strain>cv. Nipponbare</strain>
    </source>
</reference>
<reference key="5">
    <citation type="journal article" date="2013" name="Rice">
        <title>Improvement of the Oryza sativa Nipponbare reference genome using next generation sequence and optical map data.</title>
        <authorList>
            <person name="Kawahara Y."/>
            <person name="de la Bastide M."/>
            <person name="Hamilton J.P."/>
            <person name="Kanamori H."/>
            <person name="McCombie W.R."/>
            <person name="Ouyang S."/>
            <person name="Schwartz D.C."/>
            <person name="Tanaka T."/>
            <person name="Wu J."/>
            <person name="Zhou S."/>
            <person name="Childs K.L."/>
            <person name="Davidson R.M."/>
            <person name="Lin H."/>
            <person name="Quesada-Ocampo L."/>
            <person name="Vaillancourt B."/>
            <person name="Sakai H."/>
            <person name="Lee S.S."/>
            <person name="Kim J."/>
            <person name="Numa H."/>
            <person name="Itoh T."/>
            <person name="Buell C.R."/>
            <person name="Matsumoto T."/>
        </authorList>
    </citation>
    <scope>GENOME REANNOTATION</scope>
    <source>
        <strain>cv. Nipponbare</strain>
    </source>
</reference>
<reference key="6">
    <citation type="journal article" date="2004" name="Planta">
        <title>A comprehensive expression analysis of the starch synthase gene family in rice (Oryza sativa L.).</title>
        <authorList>
            <person name="Hirose T."/>
            <person name="Terao T."/>
        </authorList>
    </citation>
    <scope>SUBCELLULAR LOCATION</scope>
    <scope>TISSUE SPECIFICITY</scope>
    <scope>NOMENCLATURE</scope>
</reference>
<dbReference type="EC" id="2.4.1.21"/>
<dbReference type="EMBL" id="AF383878">
    <property type="protein sequence ID" value="AAK64284.1"/>
    <property type="molecule type" value="mRNA"/>
</dbReference>
<dbReference type="EMBL" id="DP000086">
    <property type="protein sequence ID" value="ABG66094.1"/>
    <property type="molecule type" value="Genomic_DNA"/>
</dbReference>
<dbReference type="EMBL" id="AP008216">
    <property type="protein sequence ID" value="BAF26592.1"/>
    <property type="molecule type" value="Genomic_DNA"/>
</dbReference>
<dbReference type="EMBL" id="AP014966">
    <property type="protein sequence ID" value="BAT11006.1"/>
    <property type="molecule type" value="Genomic_DNA"/>
</dbReference>
<dbReference type="RefSeq" id="XP_015614561.1">
    <property type="nucleotide sequence ID" value="XM_015759075.1"/>
</dbReference>
<dbReference type="SMR" id="Q7XE48"/>
<dbReference type="FunCoup" id="Q7XE48">
    <property type="interactions" value="139"/>
</dbReference>
<dbReference type="STRING" id="39947.Q7XE48"/>
<dbReference type="CAZy" id="GT5">
    <property type="family name" value="Glycosyltransferase Family 5"/>
</dbReference>
<dbReference type="PaxDb" id="39947-Q7XE48"/>
<dbReference type="EnsemblPlants" id="Os10t0437600-01">
    <property type="protein sequence ID" value="Os10t0437600-01"/>
    <property type="gene ID" value="Os10g0437600"/>
</dbReference>
<dbReference type="Gramene" id="Os10t0437600-01">
    <property type="protein sequence ID" value="Os10t0437600-01"/>
    <property type="gene ID" value="Os10g0437600"/>
</dbReference>
<dbReference type="KEGG" id="dosa:Os10g0437600"/>
<dbReference type="eggNOG" id="ENOG502QT35">
    <property type="taxonomic scope" value="Eukaryota"/>
</dbReference>
<dbReference type="HOGENOM" id="CLU_009583_31_1_1"/>
<dbReference type="InParanoid" id="Q7XE48"/>
<dbReference type="OMA" id="CYSPGCH"/>
<dbReference type="OrthoDB" id="512920at2759"/>
<dbReference type="PlantReactome" id="R-OSA-1119477">
    <property type="pathway name" value="Starch biosynthesis"/>
</dbReference>
<dbReference type="UniPathway" id="UPA00152"/>
<dbReference type="Proteomes" id="UP000000763">
    <property type="component" value="Chromosome 10"/>
</dbReference>
<dbReference type="Proteomes" id="UP000059680">
    <property type="component" value="Chromosome 10"/>
</dbReference>
<dbReference type="ExpressionAtlas" id="Q7XE48">
    <property type="expression patterns" value="baseline and differential"/>
</dbReference>
<dbReference type="GO" id="GO:0009501">
    <property type="term" value="C:amyloplast"/>
    <property type="evidence" value="ECO:0007669"/>
    <property type="project" value="UniProtKB-SubCell"/>
</dbReference>
<dbReference type="GO" id="GO:0009507">
    <property type="term" value="C:chloroplast"/>
    <property type="evidence" value="ECO:0007669"/>
    <property type="project" value="UniProtKB-SubCell"/>
</dbReference>
<dbReference type="GO" id="GO:0009011">
    <property type="term" value="F:alpha-1,4-glucan glucosyltransferase (ADP-glucose donor) activity"/>
    <property type="evidence" value="ECO:0007669"/>
    <property type="project" value="UniProtKB-EC"/>
</dbReference>
<dbReference type="GO" id="GO:0004373">
    <property type="term" value="F:alpha-1,4-glucan glucosyltransferase (UDP-glucose donor) activity"/>
    <property type="evidence" value="ECO:0007669"/>
    <property type="project" value="InterPro"/>
</dbReference>
<dbReference type="GO" id="GO:0010021">
    <property type="term" value="P:amylopectin biosynthetic process"/>
    <property type="evidence" value="ECO:0007669"/>
    <property type="project" value="EnsemblPlants"/>
</dbReference>
<dbReference type="GO" id="GO:0019252">
    <property type="term" value="P:starch biosynthetic process"/>
    <property type="evidence" value="ECO:0007669"/>
    <property type="project" value="UniProtKB-UniPathway"/>
</dbReference>
<dbReference type="CDD" id="cd03791">
    <property type="entry name" value="GT5_Glycogen_synthase_DULL1-like"/>
    <property type="match status" value="1"/>
</dbReference>
<dbReference type="FunFam" id="3.40.50.2000:FF:000025">
    <property type="entry name" value="Starch synthase, chloroplastic/amyloplastic"/>
    <property type="match status" value="1"/>
</dbReference>
<dbReference type="FunFam" id="3.40.50.2000:FF:000048">
    <property type="entry name" value="Starch synthase, chloroplastic/amyloplastic"/>
    <property type="match status" value="1"/>
</dbReference>
<dbReference type="Gene3D" id="3.40.50.2000">
    <property type="entry name" value="Glycogen Phosphorylase B"/>
    <property type="match status" value="2"/>
</dbReference>
<dbReference type="HAMAP" id="MF_00484">
    <property type="entry name" value="Glycogen_synth"/>
    <property type="match status" value="1"/>
</dbReference>
<dbReference type="InterPro" id="IPR011835">
    <property type="entry name" value="GS/SS"/>
</dbReference>
<dbReference type="InterPro" id="IPR013534">
    <property type="entry name" value="Starch_synth_cat_dom"/>
</dbReference>
<dbReference type="NCBIfam" id="TIGR02095">
    <property type="entry name" value="glgA"/>
    <property type="match status" value="1"/>
</dbReference>
<dbReference type="PANTHER" id="PTHR45825">
    <property type="entry name" value="GRANULE-BOUND STARCH SYNTHASE 1, CHLOROPLASTIC/AMYLOPLASTIC"/>
    <property type="match status" value="1"/>
</dbReference>
<dbReference type="PANTHER" id="PTHR45825:SF2">
    <property type="entry name" value="STARCH SYNTHASE 2, CHLOROPLASTIC_AMYLOPLASTIC"/>
    <property type="match status" value="1"/>
</dbReference>
<dbReference type="Pfam" id="PF13692">
    <property type="entry name" value="Glyco_trans_1_4"/>
    <property type="match status" value="1"/>
</dbReference>
<dbReference type="Pfam" id="PF08323">
    <property type="entry name" value="Glyco_transf_5"/>
    <property type="match status" value="1"/>
</dbReference>
<dbReference type="SUPFAM" id="SSF53756">
    <property type="entry name" value="UDP-Glycosyltransferase/glycogen phosphorylase"/>
    <property type="match status" value="1"/>
</dbReference>
<proteinExistence type="evidence at transcript level"/>
<feature type="transit peptide" description="Chloroplast" evidence="2">
    <location>
        <begin position="1"/>
        <end position="44"/>
    </location>
</feature>
<feature type="chain" id="PRO_0000011139" description="Soluble starch synthase 2-1, chloroplastic/amyloplastic">
    <location>
        <begin position="45"/>
        <end position="749"/>
    </location>
</feature>
<feature type="binding site" evidence="1">
    <location>
        <position position="272"/>
    </location>
    <ligand>
        <name>ADP-alpha-D-glucose</name>
        <dbReference type="ChEBI" id="CHEBI:57498"/>
    </ligand>
</feature>
<feature type="sequence conflict" description="In Ref. 1; AAK64284." evidence="5" ref="1">
    <original>R</original>
    <variation>H</variation>
    <location>
        <position position="215"/>
    </location>
</feature>
<feature type="sequence conflict" description="In Ref. 1; AAK64284." evidence="5" ref="1">
    <original>A</original>
    <variation>S</variation>
    <location>
        <position position="254"/>
    </location>
</feature>
<evidence type="ECO:0000250" key="1"/>
<evidence type="ECO:0000255" key="2"/>
<evidence type="ECO:0000269" key="3">
    <source>
    </source>
</evidence>
<evidence type="ECO:0000269" key="4">
    <source>
    </source>
</evidence>
<evidence type="ECO:0000305" key="5"/>